<proteinExistence type="inferred from homology"/>
<protein>
    <recommendedName>
        <fullName evidence="1">Ferredoxin--NADP reductase</fullName>
        <shortName evidence="1">FNR</shortName>
        <shortName evidence="1">Fd-NADP(+) reductase</shortName>
        <ecNumber evidence="1">1.18.1.2</ecNumber>
    </recommendedName>
</protein>
<gene>
    <name type="ordered locus">RPE_1478</name>
</gene>
<reference key="1">
    <citation type="submission" date="2006-09" db="EMBL/GenBank/DDBJ databases">
        <title>Complete sequence of Rhodopseudomonas palustris BisA53.</title>
        <authorList>
            <consortium name="US DOE Joint Genome Institute"/>
            <person name="Copeland A."/>
            <person name="Lucas S."/>
            <person name="Lapidus A."/>
            <person name="Barry K."/>
            <person name="Detter J.C."/>
            <person name="Glavina del Rio T."/>
            <person name="Hammon N."/>
            <person name="Israni S."/>
            <person name="Dalin E."/>
            <person name="Tice H."/>
            <person name="Pitluck S."/>
            <person name="Chain P."/>
            <person name="Malfatti S."/>
            <person name="Shin M."/>
            <person name="Vergez L."/>
            <person name="Schmutz J."/>
            <person name="Larimer F."/>
            <person name="Land M."/>
            <person name="Hauser L."/>
            <person name="Pelletier D.A."/>
            <person name="Kyrpides N."/>
            <person name="Kim E."/>
            <person name="Harwood C.S."/>
            <person name="Oda Y."/>
            <person name="Richardson P."/>
        </authorList>
    </citation>
    <scope>NUCLEOTIDE SEQUENCE [LARGE SCALE GENOMIC DNA]</scope>
    <source>
        <strain>BisA53</strain>
    </source>
</reference>
<organism>
    <name type="scientific">Rhodopseudomonas palustris (strain BisA53)</name>
    <dbReference type="NCBI Taxonomy" id="316055"/>
    <lineage>
        <taxon>Bacteria</taxon>
        <taxon>Pseudomonadati</taxon>
        <taxon>Pseudomonadota</taxon>
        <taxon>Alphaproteobacteria</taxon>
        <taxon>Hyphomicrobiales</taxon>
        <taxon>Nitrobacteraceae</taxon>
        <taxon>Rhodopseudomonas</taxon>
    </lineage>
</organism>
<keyword id="KW-0274">FAD</keyword>
<keyword id="KW-0285">Flavoprotein</keyword>
<keyword id="KW-0521">NADP</keyword>
<keyword id="KW-0560">Oxidoreductase</keyword>
<comment type="catalytic activity">
    <reaction evidence="1">
        <text>2 reduced [2Fe-2S]-[ferredoxin] + NADP(+) + H(+) = 2 oxidized [2Fe-2S]-[ferredoxin] + NADPH</text>
        <dbReference type="Rhea" id="RHEA:20125"/>
        <dbReference type="Rhea" id="RHEA-COMP:10000"/>
        <dbReference type="Rhea" id="RHEA-COMP:10001"/>
        <dbReference type="ChEBI" id="CHEBI:15378"/>
        <dbReference type="ChEBI" id="CHEBI:33737"/>
        <dbReference type="ChEBI" id="CHEBI:33738"/>
        <dbReference type="ChEBI" id="CHEBI:57783"/>
        <dbReference type="ChEBI" id="CHEBI:58349"/>
        <dbReference type="EC" id="1.18.1.2"/>
    </reaction>
</comment>
<comment type="cofactor">
    <cofactor evidence="1">
        <name>FAD</name>
        <dbReference type="ChEBI" id="CHEBI:57692"/>
    </cofactor>
    <text evidence="1">Binds 1 FAD per subunit.</text>
</comment>
<comment type="subunit">
    <text evidence="1">Homodimer.</text>
</comment>
<comment type="similarity">
    <text evidence="1">Belongs to the ferredoxin--NADP reductase type 2 family.</text>
</comment>
<evidence type="ECO:0000255" key="1">
    <source>
        <dbReference type="HAMAP-Rule" id="MF_01685"/>
    </source>
</evidence>
<accession>Q07RK6</accession>
<feature type="chain" id="PRO_0000364914" description="Ferredoxin--NADP reductase">
    <location>
        <begin position="1"/>
        <end position="342"/>
    </location>
</feature>
<feature type="binding site" evidence="1">
    <location>
        <position position="17"/>
    </location>
    <ligand>
        <name>FAD</name>
        <dbReference type="ChEBI" id="CHEBI:57692"/>
    </ligand>
</feature>
<feature type="binding site" evidence="1">
    <location>
        <position position="36"/>
    </location>
    <ligand>
        <name>FAD</name>
        <dbReference type="ChEBI" id="CHEBI:57692"/>
    </ligand>
</feature>
<feature type="binding site" evidence="1">
    <location>
        <position position="44"/>
    </location>
    <ligand>
        <name>FAD</name>
        <dbReference type="ChEBI" id="CHEBI:57692"/>
    </ligand>
</feature>
<feature type="binding site" evidence="1">
    <location>
        <position position="49"/>
    </location>
    <ligand>
        <name>FAD</name>
        <dbReference type="ChEBI" id="CHEBI:57692"/>
    </ligand>
</feature>
<feature type="binding site" evidence="1">
    <location>
        <position position="89"/>
    </location>
    <ligand>
        <name>FAD</name>
        <dbReference type="ChEBI" id="CHEBI:57692"/>
    </ligand>
</feature>
<feature type="binding site" evidence="1">
    <location>
        <position position="124"/>
    </location>
    <ligand>
        <name>FAD</name>
        <dbReference type="ChEBI" id="CHEBI:57692"/>
    </ligand>
</feature>
<feature type="binding site" evidence="1">
    <location>
        <position position="289"/>
    </location>
    <ligand>
        <name>FAD</name>
        <dbReference type="ChEBI" id="CHEBI:57692"/>
    </ligand>
</feature>
<feature type="binding site" evidence="1">
    <location>
        <position position="330"/>
    </location>
    <ligand>
        <name>FAD</name>
        <dbReference type="ChEBI" id="CHEBI:57692"/>
    </ligand>
</feature>
<dbReference type="EC" id="1.18.1.2" evidence="1"/>
<dbReference type="EMBL" id="CP000463">
    <property type="protein sequence ID" value="ABJ05428.1"/>
    <property type="molecule type" value="Genomic_DNA"/>
</dbReference>
<dbReference type="SMR" id="Q07RK6"/>
<dbReference type="STRING" id="316055.RPE_1478"/>
<dbReference type="KEGG" id="rpe:RPE_1478"/>
<dbReference type="eggNOG" id="COG0492">
    <property type="taxonomic scope" value="Bacteria"/>
</dbReference>
<dbReference type="HOGENOM" id="CLU_031864_5_5_5"/>
<dbReference type="OrthoDB" id="9806179at2"/>
<dbReference type="GO" id="GO:0004324">
    <property type="term" value="F:ferredoxin-NADP+ reductase activity"/>
    <property type="evidence" value="ECO:0007669"/>
    <property type="project" value="UniProtKB-UniRule"/>
</dbReference>
<dbReference type="GO" id="GO:0050660">
    <property type="term" value="F:flavin adenine dinucleotide binding"/>
    <property type="evidence" value="ECO:0007669"/>
    <property type="project" value="UniProtKB-UniRule"/>
</dbReference>
<dbReference type="GO" id="GO:0050661">
    <property type="term" value="F:NADP binding"/>
    <property type="evidence" value="ECO:0007669"/>
    <property type="project" value="UniProtKB-UniRule"/>
</dbReference>
<dbReference type="Gene3D" id="3.50.50.60">
    <property type="entry name" value="FAD/NAD(P)-binding domain"/>
    <property type="match status" value="2"/>
</dbReference>
<dbReference type="HAMAP" id="MF_01685">
    <property type="entry name" value="FENR2"/>
    <property type="match status" value="1"/>
</dbReference>
<dbReference type="InterPro" id="IPR036188">
    <property type="entry name" value="FAD/NAD-bd_sf"/>
</dbReference>
<dbReference type="InterPro" id="IPR023753">
    <property type="entry name" value="FAD/NAD-binding_dom"/>
</dbReference>
<dbReference type="InterPro" id="IPR022890">
    <property type="entry name" value="Fd--NADP_Rdtase_type_2"/>
</dbReference>
<dbReference type="InterPro" id="IPR050097">
    <property type="entry name" value="Ferredoxin-NADP_redctase_2"/>
</dbReference>
<dbReference type="PANTHER" id="PTHR48105">
    <property type="entry name" value="THIOREDOXIN REDUCTASE 1-RELATED-RELATED"/>
    <property type="match status" value="1"/>
</dbReference>
<dbReference type="Pfam" id="PF07992">
    <property type="entry name" value="Pyr_redox_2"/>
    <property type="match status" value="1"/>
</dbReference>
<dbReference type="PRINTS" id="PR00368">
    <property type="entry name" value="FADPNR"/>
</dbReference>
<dbReference type="PRINTS" id="PR00469">
    <property type="entry name" value="PNDRDTASEII"/>
</dbReference>
<dbReference type="SUPFAM" id="SSF51905">
    <property type="entry name" value="FAD/NAD(P)-binding domain"/>
    <property type="match status" value="1"/>
</dbReference>
<name>FENR_RHOP5</name>
<sequence>MSEAIKTDVLIVGAGPCGLFAVFELGLLDVKVHLVDILDKVGGQCAELYPEKPIYDIPGIPMITGHGLTESLMEQIKPFDPQFHLGEMIETVEQIGDPGFRVTTDAGTVFECKVLVVAAGGGSFQPKRPPVPGVEHYEGKSVHYAVRKMDEFRGKDILIVGGGDSALDWTLNLNPICKSMTLVHRRDDFRGAPHSVEQMRQLVASGKLDLKIGQITALQGENGQLEGATIKLNDNSTAQIKCDAMLPFFGLTMKLGPVANWGLHLENNLIPVDTGTFETNVPGIFAIGDINTYPGKLKLILSGFHEGALMAQKAVKYVYPDKRVVFQYTTSSTSLQKKLGVN</sequence>